<keyword id="KW-0028">Amino-acid biosynthesis</keyword>
<keyword id="KW-0057">Aromatic amino acid biosynthesis</keyword>
<keyword id="KW-0456">Lyase</keyword>
<name>AROQ_CALBD</name>
<proteinExistence type="inferred from homology"/>
<reference key="1">
    <citation type="submission" date="2009-01" db="EMBL/GenBank/DDBJ databases">
        <title>Complete sequence of chromosome of Caldicellulosiruptor becscii DSM 6725.</title>
        <authorList>
            <person name="Lucas S."/>
            <person name="Copeland A."/>
            <person name="Lapidus A."/>
            <person name="Glavina del Rio T."/>
            <person name="Tice H."/>
            <person name="Bruce D."/>
            <person name="Goodwin L."/>
            <person name="Pitluck S."/>
            <person name="Sims D."/>
            <person name="Meincke L."/>
            <person name="Brettin T."/>
            <person name="Detter J.C."/>
            <person name="Han C."/>
            <person name="Larimer F."/>
            <person name="Land M."/>
            <person name="Hauser L."/>
            <person name="Kyrpides N."/>
            <person name="Ovchinnikova G."/>
            <person name="Kataeva I."/>
            <person name="Adams M.W.W."/>
        </authorList>
    </citation>
    <scope>NUCLEOTIDE SEQUENCE [LARGE SCALE GENOMIC DNA]</scope>
    <source>
        <strain>ATCC BAA-1888 / DSM 6725 / KCTC 15123 / Z-1320</strain>
    </source>
</reference>
<comment type="function">
    <text evidence="1">Catalyzes a trans-dehydration via an enolate intermediate.</text>
</comment>
<comment type="catalytic activity">
    <reaction evidence="1">
        <text>3-dehydroquinate = 3-dehydroshikimate + H2O</text>
        <dbReference type="Rhea" id="RHEA:21096"/>
        <dbReference type="ChEBI" id="CHEBI:15377"/>
        <dbReference type="ChEBI" id="CHEBI:16630"/>
        <dbReference type="ChEBI" id="CHEBI:32364"/>
        <dbReference type="EC" id="4.2.1.10"/>
    </reaction>
</comment>
<comment type="pathway">
    <text evidence="1">Metabolic intermediate biosynthesis; chorismate biosynthesis; chorismate from D-erythrose 4-phosphate and phosphoenolpyruvate: step 3/7.</text>
</comment>
<comment type="subunit">
    <text evidence="1">Homododecamer.</text>
</comment>
<comment type="similarity">
    <text evidence="1">Belongs to the type-II 3-dehydroquinase family.</text>
</comment>
<feature type="chain" id="PRO_1000123678" description="3-dehydroquinate dehydratase">
    <location>
        <begin position="1"/>
        <end position="145"/>
    </location>
</feature>
<feature type="active site" description="Proton acceptor" evidence="1">
    <location>
        <position position="23"/>
    </location>
</feature>
<feature type="active site" description="Proton donor" evidence="1">
    <location>
        <position position="101"/>
    </location>
</feature>
<feature type="binding site" evidence="1">
    <location>
        <position position="75"/>
    </location>
    <ligand>
        <name>substrate</name>
    </ligand>
</feature>
<feature type="binding site" evidence="1">
    <location>
        <position position="81"/>
    </location>
    <ligand>
        <name>substrate</name>
    </ligand>
</feature>
<feature type="binding site" evidence="1">
    <location>
        <position position="88"/>
    </location>
    <ligand>
        <name>substrate</name>
    </ligand>
</feature>
<feature type="binding site" evidence="1">
    <location>
        <begin position="102"/>
        <end position="103"/>
    </location>
    <ligand>
        <name>substrate</name>
    </ligand>
</feature>
<feature type="binding site" evidence="1">
    <location>
        <position position="112"/>
    </location>
    <ligand>
        <name>substrate</name>
    </ligand>
</feature>
<feature type="site" description="Transition state stabilizer" evidence="1">
    <location>
        <position position="18"/>
    </location>
</feature>
<accession>B9MKD4</accession>
<protein>
    <recommendedName>
        <fullName evidence="1">3-dehydroquinate dehydratase</fullName>
        <shortName evidence="1">3-dehydroquinase</shortName>
        <ecNumber evidence="1">4.2.1.10</ecNumber>
    </recommendedName>
    <alternativeName>
        <fullName evidence="1">Type II DHQase</fullName>
    </alternativeName>
</protein>
<organism>
    <name type="scientific">Caldicellulosiruptor bescii (strain ATCC BAA-1888 / DSM 6725 / KCTC 15123 / Z-1320)</name>
    <name type="common">Anaerocellum thermophilum</name>
    <dbReference type="NCBI Taxonomy" id="521460"/>
    <lineage>
        <taxon>Bacteria</taxon>
        <taxon>Bacillati</taxon>
        <taxon>Bacillota</taxon>
        <taxon>Bacillota incertae sedis</taxon>
        <taxon>Caldicellulosiruptorales</taxon>
        <taxon>Caldicellulosiruptoraceae</taxon>
        <taxon>Caldicellulosiruptor</taxon>
    </lineage>
</organism>
<gene>
    <name evidence="1" type="primary">aroQ</name>
    <name type="ordered locus">Athe_1698</name>
</gene>
<dbReference type="EC" id="4.2.1.10" evidence="1"/>
<dbReference type="EMBL" id="CP001393">
    <property type="protein sequence ID" value="ACM60792.1"/>
    <property type="molecule type" value="Genomic_DNA"/>
</dbReference>
<dbReference type="RefSeq" id="WP_015908122.1">
    <property type="nucleotide sequence ID" value="NC_012034.1"/>
</dbReference>
<dbReference type="SMR" id="B9MKD4"/>
<dbReference type="STRING" id="521460.Athe_1698"/>
<dbReference type="GeneID" id="31773048"/>
<dbReference type="KEGG" id="ate:Athe_1698"/>
<dbReference type="eggNOG" id="COG0757">
    <property type="taxonomic scope" value="Bacteria"/>
</dbReference>
<dbReference type="HOGENOM" id="CLU_090968_3_0_9"/>
<dbReference type="UniPathway" id="UPA00053">
    <property type="reaction ID" value="UER00086"/>
</dbReference>
<dbReference type="Proteomes" id="UP000007723">
    <property type="component" value="Chromosome"/>
</dbReference>
<dbReference type="GO" id="GO:0003855">
    <property type="term" value="F:3-dehydroquinate dehydratase activity"/>
    <property type="evidence" value="ECO:0007669"/>
    <property type="project" value="UniProtKB-UniRule"/>
</dbReference>
<dbReference type="GO" id="GO:0008652">
    <property type="term" value="P:amino acid biosynthetic process"/>
    <property type="evidence" value="ECO:0007669"/>
    <property type="project" value="UniProtKB-KW"/>
</dbReference>
<dbReference type="GO" id="GO:0009073">
    <property type="term" value="P:aromatic amino acid family biosynthetic process"/>
    <property type="evidence" value="ECO:0007669"/>
    <property type="project" value="UniProtKB-KW"/>
</dbReference>
<dbReference type="GO" id="GO:0009423">
    <property type="term" value="P:chorismate biosynthetic process"/>
    <property type="evidence" value="ECO:0007669"/>
    <property type="project" value="UniProtKB-UniRule"/>
</dbReference>
<dbReference type="GO" id="GO:0019631">
    <property type="term" value="P:quinate catabolic process"/>
    <property type="evidence" value="ECO:0007669"/>
    <property type="project" value="TreeGrafter"/>
</dbReference>
<dbReference type="CDD" id="cd00466">
    <property type="entry name" value="DHQase_II"/>
    <property type="match status" value="1"/>
</dbReference>
<dbReference type="Gene3D" id="3.40.50.9100">
    <property type="entry name" value="Dehydroquinase, class II"/>
    <property type="match status" value="1"/>
</dbReference>
<dbReference type="HAMAP" id="MF_00169">
    <property type="entry name" value="AroQ"/>
    <property type="match status" value="1"/>
</dbReference>
<dbReference type="InterPro" id="IPR001874">
    <property type="entry name" value="DHquinase_II"/>
</dbReference>
<dbReference type="InterPro" id="IPR018509">
    <property type="entry name" value="DHquinase_II_CS"/>
</dbReference>
<dbReference type="InterPro" id="IPR036441">
    <property type="entry name" value="DHquinase_II_sf"/>
</dbReference>
<dbReference type="NCBIfam" id="TIGR01088">
    <property type="entry name" value="aroQ"/>
    <property type="match status" value="1"/>
</dbReference>
<dbReference type="NCBIfam" id="NF003805">
    <property type="entry name" value="PRK05395.1-2"/>
    <property type="match status" value="1"/>
</dbReference>
<dbReference type="NCBIfam" id="NF003806">
    <property type="entry name" value="PRK05395.1-3"/>
    <property type="match status" value="1"/>
</dbReference>
<dbReference type="NCBIfam" id="NF003807">
    <property type="entry name" value="PRK05395.1-4"/>
    <property type="match status" value="1"/>
</dbReference>
<dbReference type="PANTHER" id="PTHR21272">
    <property type="entry name" value="CATABOLIC 3-DEHYDROQUINASE"/>
    <property type="match status" value="1"/>
</dbReference>
<dbReference type="PANTHER" id="PTHR21272:SF3">
    <property type="entry name" value="CATABOLIC 3-DEHYDROQUINASE"/>
    <property type="match status" value="1"/>
</dbReference>
<dbReference type="Pfam" id="PF01220">
    <property type="entry name" value="DHquinase_II"/>
    <property type="match status" value="1"/>
</dbReference>
<dbReference type="PIRSF" id="PIRSF001399">
    <property type="entry name" value="DHquinase_II"/>
    <property type="match status" value="1"/>
</dbReference>
<dbReference type="SUPFAM" id="SSF52304">
    <property type="entry name" value="Type II 3-dehydroquinate dehydratase"/>
    <property type="match status" value="1"/>
</dbReference>
<dbReference type="PROSITE" id="PS01029">
    <property type="entry name" value="DEHYDROQUINASE_II"/>
    <property type="match status" value="1"/>
</dbReference>
<evidence type="ECO:0000255" key="1">
    <source>
        <dbReference type="HAMAP-Rule" id="MF_00169"/>
    </source>
</evidence>
<sequence>MKKVLVINGPNLNLLGIREKNIYGSVSYEDVLKSISRKAQELGFEVEFFQSNHEGEIIDKIHRAYFEKVDAIIINPGAYTHYSYAIHDAIKAVNIPTIEVHISNIHAREEFRHKSVIAPACTGQISGFGIKSYIIALYALKEILD</sequence>